<accession>Q3T033</accession>
<protein>
    <recommendedName>
        <fullName>Motile sperm domain-containing protein 3</fullName>
    </recommendedName>
</protein>
<reference key="1">
    <citation type="submission" date="2005-08" db="EMBL/GenBank/DDBJ databases">
        <authorList>
            <consortium name="NIH - Mammalian Gene Collection (MGC) project"/>
        </authorList>
    </citation>
    <scope>NUCLEOTIDE SEQUENCE [LARGE SCALE MRNA]</scope>
    <source>
        <strain>Crossbred X Angus</strain>
        <tissue>Liver</tissue>
    </source>
</reference>
<keyword id="KW-0472">Membrane</keyword>
<keyword id="KW-1185">Reference proteome</keyword>
<keyword id="KW-0812">Transmembrane</keyword>
<keyword id="KW-1133">Transmembrane helix</keyword>
<feature type="chain" id="PRO_0000248064" description="Motile sperm domain-containing protein 3">
    <location>
        <begin position="1"/>
        <end position="235"/>
    </location>
</feature>
<feature type="transmembrane region" description="Helical" evidence="1">
    <location>
        <begin position="180"/>
        <end position="200"/>
    </location>
</feature>
<feature type="transmembrane region" description="Helical" evidence="1">
    <location>
        <begin position="213"/>
        <end position="233"/>
    </location>
</feature>
<feature type="domain" description="MSP" evidence="2">
    <location>
        <begin position="33"/>
        <end position="145"/>
    </location>
</feature>
<feature type="region of interest" description="Disordered" evidence="3">
    <location>
        <begin position="1"/>
        <end position="30"/>
    </location>
</feature>
<feature type="region of interest" description="Disordered" evidence="3">
    <location>
        <begin position="143"/>
        <end position="170"/>
    </location>
</feature>
<sequence>MRRGAPQDQELVGPGAPGRGSRGAPPPSGPVVPVLVFPPDLVFRADQRSGPRQLLTLYNPTGAVLRFRVLCTAPAKYTVFDAEGYVKPQSCIDIVIRHVAPHPRNYDVQDRFRIELSEEGTEGRVVGRKDITSVLRAPAYPLELQGQSDPTPHPEPHSWTASSTAQPFPENPHPQLATSSFLLFLLMGTVSVAFLLLPLQDELGSQLPQILHVSLGQKLVAAYVLGLLTMVFLRT</sequence>
<organism>
    <name type="scientific">Bos taurus</name>
    <name type="common">Bovine</name>
    <dbReference type="NCBI Taxonomy" id="9913"/>
    <lineage>
        <taxon>Eukaryota</taxon>
        <taxon>Metazoa</taxon>
        <taxon>Chordata</taxon>
        <taxon>Craniata</taxon>
        <taxon>Vertebrata</taxon>
        <taxon>Euteleostomi</taxon>
        <taxon>Mammalia</taxon>
        <taxon>Eutheria</taxon>
        <taxon>Laurasiatheria</taxon>
        <taxon>Artiodactyla</taxon>
        <taxon>Ruminantia</taxon>
        <taxon>Pecora</taxon>
        <taxon>Bovidae</taxon>
        <taxon>Bovinae</taxon>
        <taxon>Bos</taxon>
    </lineage>
</organism>
<name>MSPD3_BOVIN</name>
<gene>
    <name type="primary">MOSPD3</name>
</gene>
<evidence type="ECO:0000255" key="1"/>
<evidence type="ECO:0000255" key="2">
    <source>
        <dbReference type="PROSITE-ProRule" id="PRU00132"/>
    </source>
</evidence>
<evidence type="ECO:0000256" key="3">
    <source>
        <dbReference type="SAM" id="MobiDB-lite"/>
    </source>
</evidence>
<evidence type="ECO:0000305" key="4"/>
<comment type="subcellular location">
    <subcellularLocation>
        <location evidence="4">Membrane</location>
        <topology evidence="4">Multi-pass membrane protein</topology>
    </subcellularLocation>
</comment>
<dbReference type="EMBL" id="BC102592">
    <property type="protein sequence ID" value="AAI02593.1"/>
    <property type="molecule type" value="mRNA"/>
</dbReference>
<dbReference type="RefSeq" id="NP_001029437.1">
    <property type="nucleotide sequence ID" value="NM_001034265.2"/>
</dbReference>
<dbReference type="RefSeq" id="XP_005225086.1">
    <property type="nucleotide sequence ID" value="XM_005225029.4"/>
</dbReference>
<dbReference type="RefSeq" id="XP_010817795.1">
    <property type="nucleotide sequence ID" value="XM_010819493.1"/>
</dbReference>
<dbReference type="RefSeq" id="XP_010817796.1">
    <property type="nucleotide sequence ID" value="XM_010819494.2"/>
</dbReference>
<dbReference type="SMR" id="Q3T033"/>
<dbReference type="FunCoup" id="Q3T033">
    <property type="interactions" value="427"/>
</dbReference>
<dbReference type="STRING" id="9913.ENSBTAP00000037064"/>
<dbReference type="PaxDb" id="9913-ENSBTAP00000037064"/>
<dbReference type="GeneID" id="506163"/>
<dbReference type="KEGG" id="bta:506163"/>
<dbReference type="CTD" id="64598"/>
<dbReference type="eggNOG" id="KOG0439">
    <property type="taxonomic scope" value="Eukaryota"/>
</dbReference>
<dbReference type="HOGENOM" id="CLU_088040_0_0_1"/>
<dbReference type="InParanoid" id="Q3T033"/>
<dbReference type="OrthoDB" id="10022288at2759"/>
<dbReference type="TreeFam" id="TF319778"/>
<dbReference type="Proteomes" id="UP000009136">
    <property type="component" value="Unplaced"/>
</dbReference>
<dbReference type="GO" id="GO:0005737">
    <property type="term" value="C:cytoplasm"/>
    <property type="evidence" value="ECO:0000318"/>
    <property type="project" value="GO_Central"/>
</dbReference>
<dbReference type="GO" id="GO:0016020">
    <property type="term" value="C:membrane"/>
    <property type="evidence" value="ECO:0007669"/>
    <property type="project" value="UniProtKB-SubCell"/>
</dbReference>
<dbReference type="FunFam" id="2.60.40.10:FF:000676">
    <property type="entry name" value="motile sperm domain-containing protein 3"/>
    <property type="match status" value="1"/>
</dbReference>
<dbReference type="Gene3D" id="2.60.40.10">
    <property type="entry name" value="Immunoglobulins"/>
    <property type="match status" value="1"/>
</dbReference>
<dbReference type="InterPro" id="IPR013783">
    <property type="entry name" value="Ig-like_fold"/>
</dbReference>
<dbReference type="InterPro" id="IPR039283">
    <property type="entry name" value="MOSPD1/3"/>
</dbReference>
<dbReference type="InterPro" id="IPR000535">
    <property type="entry name" value="MSP_dom"/>
</dbReference>
<dbReference type="InterPro" id="IPR008962">
    <property type="entry name" value="PapD-like_sf"/>
</dbReference>
<dbReference type="PANTHER" id="PTHR34441">
    <property type="entry name" value="MOTILE SPERM DOMAIN-CONTAINING PROTEIN 1"/>
    <property type="match status" value="1"/>
</dbReference>
<dbReference type="PANTHER" id="PTHR34441:SF4">
    <property type="entry name" value="MOTILE SPERM DOMAIN-CONTAINING PROTEIN 3"/>
    <property type="match status" value="1"/>
</dbReference>
<dbReference type="Pfam" id="PF00635">
    <property type="entry name" value="Motile_Sperm"/>
    <property type="match status" value="1"/>
</dbReference>
<dbReference type="SUPFAM" id="SSF49354">
    <property type="entry name" value="PapD-like"/>
    <property type="match status" value="1"/>
</dbReference>
<dbReference type="PROSITE" id="PS50202">
    <property type="entry name" value="MSP"/>
    <property type="match status" value="1"/>
</dbReference>
<proteinExistence type="evidence at transcript level"/>